<comment type="subcellular location">
    <subcellularLocation>
        <location evidence="2">Cell membrane</location>
        <topology evidence="2">Multi-pass membrane protein</topology>
    </subcellularLocation>
</comment>
<sequence>MIKMELKEAKYLGGIGAVLNLVSYAVGGILAIAGYVLILLALNKISKIFNDDEVFKKYLYGVVLWIIAVLIVIFAVGISFVSLSFIPLDYGLTAMSSFLVGVILFYILSVIGGYFIKKSYEKVSYYTGVDSFRICGLLYFIGTLLLIVIVGIIVIIVAQILEIVAYFSLPDDLKSEN</sequence>
<accession>Q59038</accession>
<feature type="chain" id="PRO_0000107456" description="Uncharacterized protein MJ1644">
    <location>
        <begin position="1"/>
        <end position="177"/>
    </location>
</feature>
<feature type="transmembrane region" description="Helical" evidence="1">
    <location>
        <begin position="20"/>
        <end position="42"/>
    </location>
</feature>
<feature type="transmembrane region" description="Helical" evidence="1">
    <location>
        <begin position="62"/>
        <end position="84"/>
    </location>
</feature>
<feature type="transmembrane region" description="Helical" evidence="1">
    <location>
        <begin position="94"/>
        <end position="116"/>
    </location>
</feature>
<feature type="transmembrane region" description="Helical" evidence="1">
    <location>
        <begin position="136"/>
        <end position="158"/>
    </location>
</feature>
<dbReference type="EMBL" id="L77117">
    <property type="protein sequence ID" value="AAB99675.1"/>
    <property type="molecule type" value="Genomic_DNA"/>
</dbReference>
<dbReference type="PIR" id="B64505">
    <property type="entry name" value="B64505"/>
</dbReference>
<dbReference type="STRING" id="243232.MJ_1644"/>
<dbReference type="PaxDb" id="243232-MJ_1644"/>
<dbReference type="DNASU" id="1452553"/>
<dbReference type="EnsemblBacteria" id="AAB99675">
    <property type="protein sequence ID" value="AAB99675"/>
    <property type="gene ID" value="MJ_1644"/>
</dbReference>
<dbReference type="KEGG" id="mja:MJ_1644"/>
<dbReference type="eggNOG" id="arCOG01644">
    <property type="taxonomic scope" value="Archaea"/>
</dbReference>
<dbReference type="HOGENOM" id="CLU_105758_1_1_2"/>
<dbReference type="InParanoid" id="Q59038"/>
<dbReference type="OrthoDB" id="86307at2157"/>
<dbReference type="PhylomeDB" id="Q59038"/>
<dbReference type="Proteomes" id="UP000000805">
    <property type="component" value="Chromosome"/>
</dbReference>
<dbReference type="GO" id="GO:0005886">
    <property type="term" value="C:plasma membrane"/>
    <property type="evidence" value="ECO:0007669"/>
    <property type="project" value="UniProtKB-SubCell"/>
</dbReference>
<dbReference type="InterPro" id="IPR010397">
    <property type="entry name" value="DUF996"/>
</dbReference>
<dbReference type="Pfam" id="PF06195">
    <property type="entry name" value="DUF996"/>
    <property type="match status" value="1"/>
</dbReference>
<dbReference type="PIRSF" id="PIRSF019678">
    <property type="entry name" value="UCP019678"/>
    <property type="match status" value="1"/>
</dbReference>
<protein>
    <recommendedName>
        <fullName>Uncharacterized protein MJ1644</fullName>
    </recommendedName>
</protein>
<gene>
    <name type="ordered locus">MJ1644</name>
</gene>
<name>Y1644_METJA</name>
<evidence type="ECO:0000255" key="1"/>
<evidence type="ECO:0000305" key="2"/>
<reference key="1">
    <citation type="journal article" date="1996" name="Science">
        <title>Complete genome sequence of the methanogenic archaeon, Methanococcus jannaschii.</title>
        <authorList>
            <person name="Bult C.J."/>
            <person name="White O."/>
            <person name="Olsen G.J."/>
            <person name="Zhou L."/>
            <person name="Fleischmann R.D."/>
            <person name="Sutton G.G."/>
            <person name="Blake J.A."/>
            <person name="FitzGerald L.M."/>
            <person name="Clayton R.A."/>
            <person name="Gocayne J.D."/>
            <person name="Kerlavage A.R."/>
            <person name="Dougherty B.A."/>
            <person name="Tomb J.-F."/>
            <person name="Adams M.D."/>
            <person name="Reich C.I."/>
            <person name="Overbeek R."/>
            <person name="Kirkness E.F."/>
            <person name="Weinstock K.G."/>
            <person name="Merrick J.M."/>
            <person name="Glodek A."/>
            <person name="Scott J.L."/>
            <person name="Geoghagen N.S.M."/>
            <person name="Weidman J.F."/>
            <person name="Fuhrmann J.L."/>
            <person name="Nguyen D."/>
            <person name="Utterback T.R."/>
            <person name="Kelley J.M."/>
            <person name="Peterson J.D."/>
            <person name="Sadow P.W."/>
            <person name="Hanna M.C."/>
            <person name="Cotton M.D."/>
            <person name="Roberts K.M."/>
            <person name="Hurst M.A."/>
            <person name="Kaine B.P."/>
            <person name="Borodovsky M."/>
            <person name="Klenk H.-P."/>
            <person name="Fraser C.M."/>
            <person name="Smith H.O."/>
            <person name="Woese C.R."/>
            <person name="Venter J.C."/>
        </authorList>
    </citation>
    <scope>NUCLEOTIDE SEQUENCE [LARGE SCALE GENOMIC DNA]</scope>
    <source>
        <strain>ATCC 43067 / DSM 2661 / JAL-1 / JCM 10045 / NBRC 100440</strain>
    </source>
</reference>
<organism>
    <name type="scientific">Methanocaldococcus jannaschii (strain ATCC 43067 / DSM 2661 / JAL-1 / JCM 10045 / NBRC 100440)</name>
    <name type="common">Methanococcus jannaschii</name>
    <dbReference type="NCBI Taxonomy" id="243232"/>
    <lineage>
        <taxon>Archaea</taxon>
        <taxon>Methanobacteriati</taxon>
        <taxon>Methanobacteriota</taxon>
        <taxon>Methanomada group</taxon>
        <taxon>Methanococci</taxon>
        <taxon>Methanococcales</taxon>
        <taxon>Methanocaldococcaceae</taxon>
        <taxon>Methanocaldococcus</taxon>
    </lineage>
</organism>
<keyword id="KW-1003">Cell membrane</keyword>
<keyword id="KW-0472">Membrane</keyword>
<keyword id="KW-1185">Reference proteome</keyword>
<keyword id="KW-0812">Transmembrane</keyword>
<keyword id="KW-1133">Transmembrane helix</keyword>
<proteinExistence type="predicted"/>